<protein>
    <recommendedName>
        <fullName>Acid shock protein 1</fullName>
    </recommendedName>
</protein>
<proteinExistence type="evidence at protein level"/>
<name>ASP1_FRUSA</name>
<keyword id="KW-0903">Direct protein sequencing</keyword>
<reference key="1">
    <citation type="journal article" date="2001" name="Microbiology">
        <title>The acid-stress response in Lactobacillus sanfranciscensis CB1.</title>
        <authorList>
            <person name="De Angelis M."/>
            <person name="Bini L."/>
            <person name="Pallini V."/>
            <person name="Cocconcelli P.S."/>
            <person name="Gobbetti M."/>
        </authorList>
    </citation>
    <scope>PROTEIN SEQUENCE</scope>
    <source>
        <strain>CB1</strain>
    </source>
</reference>
<feature type="chain" id="PRO_0000064703" description="Acid shock protein 1">
    <location>
        <begin position="1"/>
        <end position="15" status="greater than"/>
    </location>
</feature>
<feature type="non-terminal residue">
    <location>
        <position position="15"/>
    </location>
</feature>
<organism>
    <name type="scientific">Fructilactobacillus sanfranciscensis</name>
    <name type="common">Lactobacillus sanfranciscensis</name>
    <dbReference type="NCBI Taxonomy" id="1625"/>
    <lineage>
        <taxon>Bacteria</taxon>
        <taxon>Bacillati</taxon>
        <taxon>Bacillota</taxon>
        <taxon>Bacilli</taxon>
        <taxon>Lactobacillales</taxon>
        <taxon>Lactobacillaceae</taxon>
        <taxon>Fructilactobacillus</taxon>
    </lineage>
</organism>
<accession>P82648</accession>
<sequence length="15" mass="1509">SFKKGLFLGTILGGA</sequence>
<comment type="induction">
    <text>Overexpressed in acid environments.</text>
</comment>